<gene>
    <name type="primary">ELOC</name>
    <name type="synonym">TCEB1</name>
</gene>
<name>ELOC_BOVIN</name>
<accession>Q2KII4</accession>
<protein>
    <recommendedName>
        <fullName>Elongin-C</fullName>
        <shortName>EloC</shortName>
    </recommendedName>
    <alternativeName>
        <fullName>Elongin 15 kDa subunit</fullName>
    </alternativeName>
    <alternativeName>
        <fullName>RNA polymerase II transcription factor SIII subunit C</fullName>
    </alternativeName>
    <alternativeName>
        <fullName>SIII p15</fullName>
    </alternativeName>
    <alternativeName>
        <fullName>Transcription elongation factor B polypeptide 1</fullName>
    </alternativeName>
</protein>
<comment type="function">
    <text evidence="1 2">SIII, also known as elongin, is a general transcription elongation factor that increases the RNA polymerase II transcription elongation past template-encoded arresting sites. Subunit A is transcriptionally active and its transcription activity is strongly enhanced by binding to the dimeric complex of the SIII regulatory subunits B and C (elongin BC complex) (By similarity). In embryonic stem cells, the elongin BC complex is recruited by EPOP to Polycomb group (PcG) target genes in order generate genomic region that display both active and repressive chromatin properties, an important feature of pluripotent stem cells (By similarity).</text>
</comment>
<comment type="function">
    <text evidence="1 2">Core component of multiple cullin-RING-based ECS (ElonginB/C-CUL2/5-SOCS-box protein) E3 ubiquitin-protein ligase complexes, which mediate the ubiquitination of target proteins. By binding to BC-box motifs it seems to link target recruitment subunits, like VHL and members of the SOCS box family, to Cullin/RBX1 modules that activate E2 ubiquitination enzymes. Component the von Hippel-Lindau ubiquitination complex CBC(VHL). A number of ECS complexes (containing either KLHDC2, KLHDC3, KLHDC10, APPBP2, FEM1A, FEM1B or FEM1C as substrate-recognition component) are part of the DesCEND (destruction via C-end degrons) pathway, which recognizes a C-degron located at the extreme C terminus of target proteins, leading to their ubiquitination and degradation. The ECS(ASB9) complex mediates ubiquitination and degradation of CKB. As part of a multisubunit ubiquitin ligase complex, polyubiquitinates monoubiquitinated POLR2A (By similarity). ECS(LRR1) ubiquitinates MCM7 and promotes CMG replisome disassembly by VCP and chromatin extraction during S-phase (By similarity). As part of the ECS(RAB40C) complex, mediates ANKRD28 ubiquitination and degradation, thereby inhibiting protein phosphatase 6 (PP6) complex activity and focal adhesion assembly during cell migration (By similarity).</text>
</comment>
<comment type="pathway">
    <text evidence="2">Protein modification; protein ubiquitination.</text>
</comment>
<comment type="subunit">
    <text evidence="1 2">Heterotrimer of an A (ELOA, ELOA2 or ELOA3P), ELOB and ELOC subunit (By similarity). The elongin BC complex interacts with EPOP; leading to recruit the elongin BC complex to Polycomb group (PcG) target genes, thereby restricting excessive activity of the PRC2/EED-EZH2 complex (By similarity). Component of multiple cullin-RING E3 ubiquitin-protein ligase complexes composed of Elongin BC (ELOB and ELOC), a cullin (CUL2 or CUL5), a catalytic subunit (RBX1 or RNF7/RBX2), as well as a substrate adapter protein that can be either ASB2, ASB9, ASB11, KLHDC2, KLHDC3, KLHDC10, APPBP2, FEM1A, FEM1B, FEM1C, LRR1, PCMTD1, SOCS1, SOCS2, SOCS5, SPSB1, SPSB3, ELOA, VHL, WSB1, ZYG11B or RAB40C. Interacts with TMF1. As part of the Elongin BC E3 ubiquitin ligase complex; interacts with NRBP1 (By similarity). May form oligomers as a KLHDC2/KLHDC3-ELOB-ELOC complex; this interaction is autoinhibitory for the E3 ligase complex as the substrate-binding site of KLHDC2/KLHDC3 is blocked in the oligomer (By similarity).</text>
</comment>
<comment type="subcellular location">
    <subcellularLocation>
        <location evidence="2">Nucleus</location>
    </subcellularLocation>
</comment>
<comment type="PTM">
    <text evidence="2">Ubiquitinated by the DCX(AMBRA1) complex, leading to its degradation by the proteasome.</text>
</comment>
<comment type="similarity">
    <text evidence="3">Belongs to the SKP1 family.</text>
</comment>
<sequence length="112" mass="12473">MDGEEKTYGGCEGPDAMYVKLISSDGHEFIVKREHALTSGTIKAMLSGPGQFAENETNEVNFREIPSHVLSKVCMYFTYKVRYTNSSTEIPEFPIAPEIALELLMAANFLDC</sequence>
<reference key="1">
    <citation type="submission" date="2006-01" db="EMBL/GenBank/DDBJ databases">
        <authorList>
            <consortium name="NIH - Mammalian Gene Collection (MGC) project"/>
        </authorList>
    </citation>
    <scope>NUCLEOTIDE SEQUENCE [LARGE SCALE MRNA]</scope>
    <source>
        <strain>Hereford</strain>
        <tissue>Testis</tissue>
    </source>
</reference>
<proteinExistence type="evidence at protein level"/>
<organism>
    <name type="scientific">Bos taurus</name>
    <name type="common">Bovine</name>
    <dbReference type="NCBI Taxonomy" id="9913"/>
    <lineage>
        <taxon>Eukaryota</taxon>
        <taxon>Metazoa</taxon>
        <taxon>Chordata</taxon>
        <taxon>Craniata</taxon>
        <taxon>Vertebrata</taxon>
        <taxon>Euteleostomi</taxon>
        <taxon>Mammalia</taxon>
        <taxon>Eutheria</taxon>
        <taxon>Laurasiatheria</taxon>
        <taxon>Artiodactyla</taxon>
        <taxon>Ruminantia</taxon>
        <taxon>Pecora</taxon>
        <taxon>Bovidae</taxon>
        <taxon>Bovinae</taxon>
        <taxon>Bos</taxon>
    </lineage>
</organism>
<dbReference type="EMBL" id="BC112626">
    <property type="protein sequence ID" value="AAI12627.1"/>
    <property type="molecule type" value="mRNA"/>
</dbReference>
<dbReference type="RefSeq" id="NP_001039958.1">
    <property type="nucleotide sequence ID" value="NM_001046493.2"/>
</dbReference>
<dbReference type="RefSeq" id="NP_001346918.1">
    <property type="nucleotide sequence ID" value="NM_001359989.1"/>
</dbReference>
<dbReference type="RefSeq" id="XP_005215584.1">
    <property type="nucleotide sequence ID" value="XM_005215527.3"/>
</dbReference>
<dbReference type="RefSeq" id="XP_005215585.1">
    <property type="nucleotide sequence ID" value="XM_005215528.5"/>
</dbReference>
<dbReference type="RefSeq" id="XP_059749315.1">
    <property type="nucleotide sequence ID" value="XM_059893332.1"/>
</dbReference>
<dbReference type="PDB" id="6I7Q">
    <property type="method" value="X-ray"/>
    <property type="resolution" value="1.80 A"/>
    <property type="chains" value="C=17-112"/>
</dbReference>
<dbReference type="PDBsum" id="6I7Q"/>
<dbReference type="BMRB" id="Q2KII4"/>
<dbReference type="SMR" id="Q2KII4"/>
<dbReference type="FunCoup" id="Q2KII4">
    <property type="interactions" value="2984"/>
</dbReference>
<dbReference type="IntAct" id="Q2KII4">
    <property type="interactions" value="2"/>
</dbReference>
<dbReference type="STRING" id="9913.ENSBTAP00000065112"/>
<dbReference type="PaxDb" id="9913-ENSBTAP00000002843"/>
<dbReference type="Ensembl" id="ENSBTAT00000078734.1">
    <property type="protein sequence ID" value="ENSBTAP00000065112.1"/>
    <property type="gene ID" value="ENSBTAG00000050514.2"/>
</dbReference>
<dbReference type="GeneID" id="540859"/>
<dbReference type="KEGG" id="bta:540859"/>
<dbReference type="CTD" id="6921"/>
<dbReference type="VEuPathDB" id="HostDB:ENSBTAG00000050514"/>
<dbReference type="VGNC" id="VGNC:28445">
    <property type="gene designation" value="ELOC"/>
</dbReference>
<dbReference type="eggNOG" id="KOG3473">
    <property type="taxonomic scope" value="Eukaryota"/>
</dbReference>
<dbReference type="GeneTree" id="ENSGT00390000011717"/>
<dbReference type="HOGENOM" id="CLU_130038_0_2_1"/>
<dbReference type="InParanoid" id="Q2KII4"/>
<dbReference type="OMA" id="AMVSPII"/>
<dbReference type="OrthoDB" id="249087at2759"/>
<dbReference type="TreeFam" id="TF300233"/>
<dbReference type="Reactome" id="R-BTA-1234176">
    <property type="pathway name" value="Oxygen-dependent proline hydroxylation of Hypoxia-inducible Factor Alpha"/>
</dbReference>
<dbReference type="Reactome" id="R-BTA-674695">
    <property type="pathway name" value="RNA Polymerase II Pre-transcription Events"/>
</dbReference>
<dbReference type="Reactome" id="R-BTA-6796648">
    <property type="pathway name" value="TP53 Regulates Transcription of DNA Repair Genes"/>
</dbReference>
<dbReference type="Reactome" id="R-BTA-75955">
    <property type="pathway name" value="RNA Polymerase II Transcription Elongation"/>
</dbReference>
<dbReference type="Reactome" id="R-BTA-8951664">
    <property type="pathway name" value="Neddylation"/>
</dbReference>
<dbReference type="Reactome" id="R-BTA-9705462">
    <property type="pathway name" value="Inactivation of CSF3 (G-CSF) signaling"/>
</dbReference>
<dbReference type="Reactome" id="R-BTA-983168">
    <property type="pathway name" value="Antigen processing: Ubiquitination &amp; Proteasome degradation"/>
</dbReference>
<dbReference type="UniPathway" id="UPA00143"/>
<dbReference type="Proteomes" id="UP000009136">
    <property type="component" value="Chromosome 14"/>
</dbReference>
<dbReference type="Bgee" id="ENSBTAG00000050514">
    <property type="expression patterns" value="Expressed in oocyte and 106 other cell types or tissues"/>
</dbReference>
<dbReference type="GO" id="GO:0031466">
    <property type="term" value="C:Cul5-RING ubiquitin ligase complex"/>
    <property type="evidence" value="ECO:0000250"/>
    <property type="project" value="UniProtKB"/>
</dbReference>
<dbReference type="GO" id="GO:0070449">
    <property type="term" value="C:elongin complex"/>
    <property type="evidence" value="ECO:0000318"/>
    <property type="project" value="GO_Central"/>
</dbReference>
<dbReference type="GO" id="GO:0030674">
    <property type="term" value="F:protein-macromolecule adaptor activity"/>
    <property type="evidence" value="ECO:0000318"/>
    <property type="project" value="GO_Central"/>
</dbReference>
<dbReference type="GO" id="GO:0016567">
    <property type="term" value="P:protein ubiquitination"/>
    <property type="evidence" value="ECO:0000250"/>
    <property type="project" value="UniProtKB"/>
</dbReference>
<dbReference type="GO" id="GO:0006511">
    <property type="term" value="P:ubiquitin-dependent protein catabolic process"/>
    <property type="evidence" value="ECO:0000318"/>
    <property type="project" value="GO_Central"/>
</dbReference>
<dbReference type="CDD" id="cd18321">
    <property type="entry name" value="BTB_POZ_EloC"/>
    <property type="match status" value="1"/>
</dbReference>
<dbReference type="FunFam" id="3.30.710.10:FF:000016">
    <property type="entry name" value="Transcription elongation factor"/>
    <property type="match status" value="1"/>
</dbReference>
<dbReference type="Gene3D" id="3.30.710.10">
    <property type="entry name" value="Potassium Channel Kv1.1, Chain A"/>
    <property type="match status" value="1"/>
</dbReference>
<dbReference type="InterPro" id="IPR039948">
    <property type="entry name" value="ELC1"/>
</dbReference>
<dbReference type="InterPro" id="IPR001232">
    <property type="entry name" value="SKP1-like"/>
</dbReference>
<dbReference type="InterPro" id="IPR011333">
    <property type="entry name" value="SKP1/BTB/POZ_sf"/>
</dbReference>
<dbReference type="InterPro" id="IPR016073">
    <property type="entry name" value="Skp1_comp_POZ"/>
</dbReference>
<dbReference type="PANTHER" id="PTHR20648">
    <property type="entry name" value="ELONGIN-C"/>
    <property type="match status" value="1"/>
</dbReference>
<dbReference type="Pfam" id="PF03931">
    <property type="entry name" value="Skp1_POZ"/>
    <property type="match status" value="1"/>
</dbReference>
<dbReference type="SMART" id="SM00512">
    <property type="entry name" value="Skp1"/>
    <property type="match status" value="1"/>
</dbReference>
<dbReference type="SUPFAM" id="SSF54695">
    <property type="entry name" value="POZ domain"/>
    <property type="match status" value="1"/>
</dbReference>
<feature type="chain" id="PRO_0000247546" description="Elongin-C">
    <location>
        <begin position="1"/>
        <end position="112"/>
    </location>
</feature>
<feature type="strand" evidence="4">
    <location>
        <begin position="18"/>
        <end position="22"/>
    </location>
</feature>
<feature type="strand" evidence="4">
    <location>
        <begin position="28"/>
        <end position="32"/>
    </location>
</feature>
<feature type="helix" evidence="4">
    <location>
        <begin position="33"/>
        <end position="36"/>
    </location>
</feature>
<feature type="helix" evidence="4">
    <location>
        <begin position="40"/>
        <end position="45"/>
    </location>
</feature>
<feature type="strand" evidence="4">
    <location>
        <begin position="49"/>
        <end position="51"/>
    </location>
</feature>
<feature type="strand" evidence="4">
    <location>
        <begin position="53"/>
        <end position="55"/>
    </location>
</feature>
<feature type="strand" evidence="4">
    <location>
        <begin position="59"/>
        <end position="61"/>
    </location>
</feature>
<feature type="helix" evidence="4">
    <location>
        <begin position="67"/>
        <end position="83"/>
    </location>
</feature>
<feature type="helix" evidence="4">
    <location>
        <begin position="97"/>
        <end position="110"/>
    </location>
</feature>
<keyword id="KW-0002">3D-structure</keyword>
<keyword id="KW-0539">Nucleus</keyword>
<keyword id="KW-1185">Reference proteome</keyword>
<keyword id="KW-0804">Transcription</keyword>
<keyword id="KW-0805">Transcription regulation</keyword>
<keyword id="KW-0832">Ubl conjugation</keyword>
<keyword id="KW-0833">Ubl conjugation pathway</keyword>
<evidence type="ECO:0000250" key="1">
    <source>
        <dbReference type="UniProtKB" id="P83940"/>
    </source>
</evidence>
<evidence type="ECO:0000250" key="2">
    <source>
        <dbReference type="UniProtKB" id="Q15369"/>
    </source>
</evidence>
<evidence type="ECO:0000305" key="3"/>
<evidence type="ECO:0007829" key="4">
    <source>
        <dbReference type="PDB" id="6I7Q"/>
    </source>
</evidence>